<proteinExistence type="evidence at protein level"/>
<organism>
    <name type="scientific">Mus musculus</name>
    <name type="common">Mouse</name>
    <dbReference type="NCBI Taxonomy" id="10090"/>
    <lineage>
        <taxon>Eukaryota</taxon>
        <taxon>Metazoa</taxon>
        <taxon>Chordata</taxon>
        <taxon>Craniata</taxon>
        <taxon>Vertebrata</taxon>
        <taxon>Euteleostomi</taxon>
        <taxon>Mammalia</taxon>
        <taxon>Eutheria</taxon>
        <taxon>Euarchontoglires</taxon>
        <taxon>Glires</taxon>
        <taxon>Rodentia</taxon>
        <taxon>Myomorpha</taxon>
        <taxon>Muroidea</taxon>
        <taxon>Muridae</taxon>
        <taxon>Murinae</taxon>
        <taxon>Mus</taxon>
        <taxon>Mus</taxon>
    </lineage>
</organism>
<protein>
    <recommendedName>
        <fullName>Apoptotic chromatin condensation inducer in the nucleus</fullName>
        <shortName>Acinus</shortName>
    </recommendedName>
</protein>
<reference key="1">
    <citation type="journal article" date="1999" name="Nature">
        <title>Acinus is a caspase-3-activated protein required for apoptotic chromatin condensation.</title>
        <authorList>
            <person name="Sahara S."/>
            <person name="Aoto M."/>
            <person name="Eguchi Y."/>
            <person name="Imamoto N."/>
            <person name="Yoneda Y."/>
            <person name="Tsujimoto Y."/>
        </authorList>
    </citation>
    <scope>NUCLEOTIDE SEQUENCE [MRNA] (ISOFORMS 2 AND 3)</scope>
</reference>
<reference key="2">
    <citation type="submission" date="1999-07" db="EMBL/GenBank/DDBJ databases">
        <title>Molecular cloning of murine acinusL, a gene for apoptotic chromatin condensation.</title>
        <authorList>
            <person name="Mamoru A."/>
            <person name="Setsuko S."/>
            <person name="Yoshihide T."/>
        </authorList>
    </citation>
    <scope>NUCLEOTIDE SEQUENCE [MRNA] (ISOFORM 1)</scope>
</reference>
<reference key="3">
    <citation type="journal article" date="2009" name="PLoS Biol.">
        <title>Lineage-specific biology revealed by a finished genome assembly of the mouse.</title>
        <authorList>
            <person name="Church D.M."/>
            <person name="Goodstadt L."/>
            <person name="Hillier L.W."/>
            <person name="Zody M.C."/>
            <person name="Goldstein S."/>
            <person name="She X."/>
            <person name="Bult C.J."/>
            <person name="Agarwala R."/>
            <person name="Cherry J.L."/>
            <person name="DiCuccio M."/>
            <person name="Hlavina W."/>
            <person name="Kapustin Y."/>
            <person name="Meric P."/>
            <person name="Maglott D."/>
            <person name="Birtle Z."/>
            <person name="Marques A.C."/>
            <person name="Graves T."/>
            <person name="Zhou S."/>
            <person name="Teague B."/>
            <person name="Potamousis K."/>
            <person name="Churas C."/>
            <person name="Place M."/>
            <person name="Herschleb J."/>
            <person name="Runnheim R."/>
            <person name="Forrest D."/>
            <person name="Amos-Landgraf J."/>
            <person name="Schwartz D.C."/>
            <person name="Cheng Z."/>
            <person name="Lindblad-Toh K."/>
            <person name="Eichler E.E."/>
            <person name="Ponting C.P."/>
        </authorList>
    </citation>
    <scope>NUCLEOTIDE SEQUENCE [LARGE SCALE GENOMIC DNA]</scope>
    <source>
        <strain>C57BL/6J</strain>
    </source>
</reference>
<reference key="4">
    <citation type="journal article" date="2005" name="Science">
        <title>The transcriptional landscape of the mammalian genome.</title>
        <authorList>
            <person name="Carninci P."/>
            <person name="Kasukawa T."/>
            <person name="Katayama S."/>
            <person name="Gough J."/>
            <person name="Frith M.C."/>
            <person name="Maeda N."/>
            <person name="Oyama R."/>
            <person name="Ravasi T."/>
            <person name="Lenhard B."/>
            <person name="Wells C."/>
            <person name="Kodzius R."/>
            <person name="Shimokawa K."/>
            <person name="Bajic V.B."/>
            <person name="Brenner S.E."/>
            <person name="Batalov S."/>
            <person name="Forrest A.R."/>
            <person name="Zavolan M."/>
            <person name="Davis M.J."/>
            <person name="Wilming L.G."/>
            <person name="Aidinis V."/>
            <person name="Allen J.E."/>
            <person name="Ambesi-Impiombato A."/>
            <person name="Apweiler R."/>
            <person name="Aturaliya R.N."/>
            <person name="Bailey T.L."/>
            <person name="Bansal M."/>
            <person name="Baxter L."/>
            <person name="Beisel K.W."/>
            <person name="Bersano T."/>
            <person name="Bono H."/>
            <person name="Chalk A.M."/>
            <person name="Chiu K.P."/>
            <person name="Choudhary V."/>
            <person name="Christoffels A."/>
            <person name="Clutterbuck D.R."/>
            <person name="Crowe M.L."/>
            <person name="Dalla E."/>
            <person name="Dalrymple B.P."/>
            <person name="de Bono B."/>
            <person name="Della Gatta G."/>
            <person name="di Bernardo D."/>
            <person name="Down T."/>
            <person name="Engstrom P."/>
            <person name="Fagiolini M."/>
            <person name="Faulkner G."/>
            <person name="Fletcher C.F."/>
            <person name="Fukushima T."/>
            <person name="Furuno M."/>
            <person name="Futaki S."/>
            <person name="Gariboldi M."/>
            <person name="Georgii-Hemming P."/>
            <person name="Gingeras T.R."/>
            <person name="Gojobori T."/>
            <person name="Green R.E."/>
            <person name="Gustincich S."/>
            <person name="Harbers M."/>
            <person name="Hayashi Y."/>
            <person name="Hensch T.K."/>
            <person name="Hirokawa N."/>
            <person name="Hill D."/>
            <person name="Huminiecki L."/>
            <person name="Iacono M."/>
            <person name="Ikeo K."/>
            <person name="Iwama A."/>
            <person name="Ishikawa T."/>
            <person name="Jakt M."/>
            <person name="Kanapin A."/>
            <person name="Katoh M."/>
            <person name="Kawasawa Y."/>
            <person name="Kelso J."/>
            <person name="Kitamura H."/>
            <person name="Kitano H."/>
            <person name="Kollias G."/>
            <person name="Krishnan S.P."/>
            <person name="Kruger A."/>
            <person name="Kummerfeld S.K."/>
            <person name="Kurochkin I.V."/>
            <person name="Lareau L.F."/>
            <person name="Lazarevic D."/>
            <person name="Lipovich L."/>
            <person name="Liu J."/>
            <person name="Liuni S."/>
            <person name="McWilliam S."/>
            <person name="Madan Babu M."/>
            <person name="Madera M."/>
            <person name="Marchionni L."/>
            <person name="Matsuda H."/>
            <person name="Matsuzawa S."/>
            <person name="Miki H."/>
            <person name="Mignone F."/>
            <person name="Miyake S."/>
            <person name="Morris K."/>
            <person name="Mottagui-Tabar S."/>
            <person name="Mulder N."/>
            <person name="Nakano N."/>
            <person name="Nakauchi H."/>
            <person name="Ng P."/>
            <person name="Nilsson R."/>
            <person name="Nishiguchi S."/>
            <person name="Nishikawa S."/>
            <person name="Nori F."/>
            <person name="Ohara O."/>
            <person name="Okazaki Y."/>
            <person name="Orlando V."/>
            <person name="Pang K.C."/>
            <person name="Pavan W.J."/>
            <person name="Pavesi G."/>
            <person name="Pesole G."/>
            <person name="Petrovsky N."/>
            <person name="Piazza S."/>
            <person name="Reed J."/>
            <person name="Reid J.F."/>
            <person name="Ring B.Z."/>
            <person name="Ringwald M."/>
            <person name="Rost B."/>
            <person name="Ruan Y."/>
            <person name="Salzberg S.L."/>
            <person name="Sandelin A."/>
            <person name="Schneider C."/>
            <person name="Schoenbach C."/>
            <person name="Sekiguchi K."/>
            <person name="Semple C.A."/>
            <person name="Seno S."/>
            <person name="Sessa L."/>
            <person name="Sheng Y."/>
            <person name="Shibata Y."/>
            <person name="Shimada H."/>
            <person name="Shimada K."/>
            <person name="Silva D."/>
            <person name="Sinclair B."/>
            <person name="Sperling S."/>
            <person name="Stupka E."/>
            <person name="Sugiura K."/>
            <person name="Sultana R."/>
            <person name="Takenaka Y."/>
            <person name="Taki K."/>
            <person name="Tammoja K."/>
            <person name="Tan S.L."/>
            <person name="Tang S."/>
            <person name="Taylor M.S."/>
            <person name="Tegner J."/>
            <person name="Teichmann S.A."/>
            <person name="Ueda H.R."/>
            <person name="van Nimwegen E."/>
            <person name="Verardo R."/>
            <person name="Wei C.L."/>
            <person name="Yagi K."/>
            <person name="Yamanishi H."/>
            <person name="Zabarovsky E."/>
            <person name="Zhu S."/>
            <person name="Zimmer A."/>
            <person name="Hide W."/>
            <person name="Bult C."/>
            <person name="Grimmond S.M."/>
            <person name="Teasdale R.D."/>
            <person name="Liu E.T."/>
            <person name="Brusic V."/>
            <person name="Quackenbush J."/>
            <person name="Wahlestedt C."/>
            <person name="Mattick J.S."/>
            <person name="Hume D.A."/>
            <person name="Kai C."/>
            <person name="Sasaki D."/>
            <person name="Tomaru Y."/>
            <person name="Fukuda S."/>
            <person name="Kanamori-Katayama M."/>
            <person name="Suzuki M."/>
            <person name="Aoki J."/>
            <person name="Arakawa T."/>
            <person name="Iida J."/>
            <person name="Imamura K."/>
            <person name="Itoh M."/>
            <person name="Kato T."/>
            <person name="Kawaji H."/>
            <person name="Kawagashira N."/>
            <person name="Kawashima T."/>
            <person name="Kojima M."/>
            <person name="Kondo S."/>
            <person name="Konno H."/>
            <person name="Nakano K."/>
            <person name="Ninomiya N."/>
            <person name="Nishio T."/>
            <person name="Okada M."/>
            <person name="Plessy C."/>
            <person name="Shibata K."/>
            <person name="Shiraki T."/>
            <person name="Suzuki S."/>
            <person name="Tagami M."/>
            <person name="Waki K."/>
            <person name="Watahiki A."/>
            <person name="Okamura-Oho Y."/>
            <person name="Suzuki H."/>
            <person name="Kawai J."/>
            <person name="Hayashizaki Y."/>
        </authorList>
    </citation>
    <scope>NUCLEOTIDE SEQUENCE [LARGE SCALE MRNA] OF 1-284 (ISOFORM 1)</scope>
    <scope>NUCLEOTIDE SEQUENCE [LARGE SCALE MRNA] OF 1-1190 (ISOFORM 2)</scope>
    <scope>NUCLEOTIDE SEQUENCE [LARGE SCALE MRNA] OF 57-806 (ISOFORM 4)</scope>
    <source>
        <strain>C57BL/6J</strain>
        <tissue>Embryo</tissue>
        <tissue>Pancreatic islet</tissue>
    </source>
</reference>
<reference key="5">
    <citation type="journal article" date="2007" name="Proc. Natl. Acad. Sci. U.S.A.">
        <title>Large-scale phosphorylation analysis of mouse liver.</title>
        <authorList>
            <person name="Villen J."/>
            <person name="Beausoleil S.A."/>
            <person name="Gerber S.A."/>
            <person name="Gygi S.P."/>
        </authorList>
    </citation>
    <scope>PHOSPHORYLATION [LARGE SCALE ANALYSIS] AT SER-295; SER-391; SER-479; SER-491 AND SER-710</scope>
    <scope>IDENTIFICATION BY MASS SPECTROMETRY [LARGE SCALE ANALYSIS]</scope>
    <source>
        <tissue>Liver</tissue>
    </source>
</reference>
<reference key="6">
    <citation type="journal article" date="2008" name="Cancer Res.">
        <title>Serine/arginine protein-specific kinase 2 promotes leukemia cell proliferation by phosphorylating acinus and regulating cyclin A1.</title>
        <authorList>
            <person name="Jang S.W."/>
            <person name="Yang S.J."/>
            <person name="Ehlen A."/>
            <person name="Dong S."/>
            <person name="Khoury H."/>
            <person name="Chen J."/>
            <person name="Persson J.L."/>
            <person name="Ye K."/>
        </authorList>
    </citation>
    <scope>INTERACTION WITH SRPK2</scope>
</reference>
<reference key="7">
    <citation type="journal article" date="2008" name="J. Proteome Res.">
        <title>Specific phosphopeptide enrichment with immobilized titanium ion affinity chromatography adsorbent for phosphoproteome analysis.</title>
        <authorList>
            <person name="Zhou H."/>
            <person name="Ye M."/>
            <person name="Dong J."/>
            <person name="Han G."/>
            <person name="Jiang X."/>
            <person name="Wu R."/>
            <person name="Zou H."/>
        </authorList>
    </citation>
    <scope>PHOSPHORYLATION [LARGE SCALE ANALYSIS] AT SER-1003</scope>
    <scope>IDENTIFICATION BY MASS SPECTROMETRY [LARGE SCALE ANALYSIS]</scope>
    <source>
        <tissue>Liver</tissue>
    </source>
</reference>
<reference key="8">
    <citation type="journal article" date="2009" name="Immunity">
        <title>The phagosomal proteome in interferon-gamma-activated macrophages.</title>
        <authorList>
            <person name="Trost M."/>
            <person name="English L."/>
            <person name="Lemieux S."/>
            <person name="Courcelles M."/>
            <person name="Desjardins M."/>
            <person name="Thibault P."/>
        </authorList>
    </citation>
    <scope>PHOSPHORYLATION [LARGE SCALE ANALYSIS] AT SER-216 AND SER-710</scope>
    <scope>IDENTIFICATION BY MASS SPECTROMETRY [LARGE SCALE ANALYSIS]</scope>
</reference>
<reference key="9">
    <citation type="journal article" date="2009" name="Mol. Cell. Proteomics">
        <title>Large scale localization of protein phosphorylation by use of electron capture dissociation mass spectrometry.</title>
        <authorList>
            <person name="Sweet S.M."/>
            <person name="Bailey C.M."/>
            <person name="Cunningham D.L."/>
            <person name="Heath J.K."/>
            <person name="Cooper H.J."/>
        </authorList>
    </citation>
    <scope>PHOSPHORYLATION [LARGE SCALE ANALYSIS] AT SER-479; SER-491 AND SER-1003</scope>
    <scope>IDENTIFICATION BY MASS SPECTROMETRY [LARGE SCALE ANALYSIS]</scope>
    <source>
        <tissue>Embryonic fibroblast</tissue>
    </source>
</reference>
<reference key="10">
    <citation type="journal article" date="2010" name="Cell">
        <title>A tissue-specific atlas of mouse protein phosphorylation and expression.</title>
        <authorList>
            <person name="Huttlin E.L."/>
            <person name="Jedrychowski M.P."/>
            <person name="Elias J.E."/>
            <person name="Goswami T."/>
            <person name="Rad R."/>
            <person name="Beausoleil S.A."/>
            <person name="Villen J."/>
            <person name="Haas W."/>
            <person name="Sowa M.E."/>
            <person name="Gygi S.P."/>
        </authorList>
    </citation>
    <scope>PHOSPHORYLATION [LARGE SCALE ANALYSIS] AT SER-216; SER-387; SER-389; SER-391; SER-413; THR-417; SER-454; SER-477; SER-479; SER-491; SER-497; SER-710; SER-838; SER-898; SER-986 AND SER-1003</scope>
    <scope>IDENTIFICATION BY MASS SPECTROMETRY [LARGE SCALE ANALYSIS]</scope>
    <source>
        <tissue>Brain</tissue>
        <tissue>Brown adipose tissue</tissue>
        <tissue>Heart</tissue>
        <tissue>Kidney</tissue>
        <tissue>Liver</tissue>
        <tissue>Lung</tissue>
        <tissue>Pancreas</tissue>
        <tissue>Spleen</tissue>
        <tissue>Testis</tissue>
    </source>
</reference>
<reference key="11">
    <citation type="journal article" date="2013" name="Mol. Cell">
        <title>SIRT5-mediated lysine desuccinylation impacts diverse metabolic pathways.</title>
        <authorList>
            <person name="Park J."/>
            <person name="Chen Y."/>
            <person name="Tishkoff D.X."/>
            <person name="Peng C."/>
            <person name="Tan M."/>
            <person name="Dai L."/>
            <person name="Xie Z."/>
            <person name="Zhang Y."/>
            <person name="Zwaans B.M."/>
            <person name="Skinner M.E."/>
            <person name="Lombard D.B."/>
            <person name="Zhao Y."/>
        </authorList>
    </citation>
    <scope>ACETYLATION [LARGE SCALE ANALYSIS] AT LYS-861</scope>
    <scope>IDENTIFICATION BY MASS SPECTROMETRY [LARGE SCALE ANALYSIS]</scope>
    <source>
        <tissue>Embryonic fibroblast</tissue>
    </source>
</reference>
<sequence length="1338" mass="150719">MWGRKRPNSSGETRGILSGNRGVDYGSGRGQSGPFEGRWRKLPKMPEAVGTDPSTSRKMAELEEVTLDGKPLQALRVTDLKAALEQRGLAKSGQKSALVKRLKGALMLENLQKHSTPHAAFQPNSQIGEEMSQNSFIKQYLEKQQELLRQRLEREAREAAELEEASAESEDEMTHPEGVASLLPPDFQSSLNRPELELSTHSPRKSSSFSEEKGESDDEKPRKGERRSSRVRQAKSKLPEYSQTAEEEEDQETPSRNLRVRADRNLKIEEEEEEEEEEEDDDDEEEEEVDEAQKSREAEAPTLKQFEDEEGEERTRAKPEKVVDEKPLNIRSQEKGELEKGGRVTRSQEEARRSHLARQQQEKETQIVSLPQEENEVKSSQSLEEKSQSPSPPPLPEDLEKAPVVLQPEQIVSEEETPPPLLTKEASSPPTHIQLQEEMEPVEGPAPPVLIQLSPPNTDAGAREPLASPHPAQLLRSLSPLSGTTDTKAESPAGRVSDESVLPLAQKSSLPECSTQKGVESEREKSAPLPLTVEEFAPAKGITEEPMKKQSLEQKEGRRASHALFPEHSGKQSADSSSSRSSSPSSSSSPSRSPSPDSVASRPQSSPGSKQRDGAQARVHANPHERPKMGSRSTSESRSRSRSRSRSASSSSRKSLSPGVSRDSNTSYTETKDPSCGQEAAAPSGPQLQVLEPKEKAPTFSASVRGRHLSHPEPEQQHVIQRLQPEQGSPKKCEAEEAEPPAATQPQTSETQISHLLESERTHHTVEEKEEVTMDTSENRPENEVPEPPLPVADQVSNDERPEGGAEEEEKKESSMPKSFKRKISVVSATKGVQAGNSDTEGGQPGRKRRWGASTAATQKKPSISITTESLKSLIPDIKPLAGQEAVVDLHADDSRISEDETERNGDDGTHDKGLKICRTVTQVVPAEGQENGQREEEEEKEPEAELPAPPQVSVEVALPPPVEHEVKKVTLGDTLTRRSISQQKSGVSITIDDPVRTAQVPSPPRGKISNIVHISNLVRPFTLGQLKELLGRTGTLVEEAFWIDKIKSHCFVTYSTVEEAVATRTALHGVKWPQSNPKFLCADYAEQDELDYHRGLLVDRPSETKAEEQGAPRPLHPPPPPPVQPPPHPRAEQREQERAVREQWAEREREMERRERTRSEREWDRDKVREGPRSRSRSRDRRRKERAKSKEKKSEKKEKAQEEPPAKLLDDLFRKTKAAPCIYWLPLTESQIVQKEAEQAERAKEREKRRKEREEEEQKEREKEAERERNRQLEREKRREHSRERERDRERERDRGDRERERERDRDRGRERDRRDTKRHSRSRSRSTPVRDRGGRR</sequence>
<feature type="chain" id="PRO_0000064437" description="Apoptotic chromatin condensation inducer in the nucleus">
    <location>
        <begin position="1"/>
        <end position="1338"/>
    </location>
</feature>
<feature type="domain" description="SAP" evidence="3">
    <location>
        <begin position="72"/>
        <end position="106"/>
    </location>
</feature>
<feature type="region of interest" description="Disordered" evidence="4">
    <location>
        <begin position="1"/>
        <end position="57"/>
    </location>
</feature>
<feature type="region of interest" description="Disordered" evidence="4">
    <location>
        <begin position="155"/>
        <end position="866"/>
    </location>
</feature>
<feature type="region of interest" description="Disordered" evidence="4">
    <location>
        <begin position="892"/>
        <end position="950"/>
    </location>
</feature>
<feature type="region of interest" description="Disordered" evidence="4">
    <location>
        <begin position="1104"/>
        <end position="1214"/>
    </location>
</feature>
<feature type="region of interest" description="Sufficient for interaction with RNPS1 and SAP18 and formation of the ASAP complex" evidence="1">
    <location>
        <begin position="1209"/>
        <end position="1236"/>
    </location>
</feature>
<feature type="region of interest" description="Disordered" evidence="4">
    <location>
        <begin position="1226"/>
        <end position="1338"/>
    </location>
</feature>
<feature type="compositionally biased region" description="Acidic residues" evidence="4">
    <location>
        <begin position="161"/>
        <end position="171"/>
    </location>
</feature>
<feature type="compositionally biased region" description="Basic and acidic residues" evidence="4">
    <location>
        <begin position="219"/>
        <end position="228"/>
    </location>
</feature>
<feature type="compositionally biased region" description="Acidic residues" evidence="4">
    <location>
        <begin position="269"/>
        <end position="290"/>
    </location>
</feature>
<feature type="compositionally biased region" description="Basic and acidic residues" evidence="4">
    <location>
        <begin position="313"/>
        <end position="353"/>
    </location>
</feature>
<feature type="compositionally biased region" description="Polar residues" evidence="4">
    <location>
        <begin position="425"/>
        <end position="434"/>
    </location>
</feature>
<feature type="compositionally biased region" description="Polar residues" evidence="4">
    <location>
        <begin position="506"/>
        <end position="518"/>
    </location>
</feature>
<feature type="compositionally biased region" description="Basic and acidic residues" evidence="4">
    <location>
        <begin position="542"/>
        <end position="559"/>
    </location>
</feature>
<feature type="compositionally biased region" description="Low complexity" evidence="4">
    <location>
        <begin position="573"/>
        <end position="603"/>
    </location>
</feature>
<feature type="compositionally biased region" description="Low complexity" evidence="4">
    <location>
        <begin position="646"/>
        <end position="662"/>
    </location>
</feature>
<feature type="compositionally biased region" description="Polar residues" evidence="4">
    <location>
        <begin position="744"/>
        <end position="754"/>
    </location>
</feature>
<feature type="compositionally biased region" description="Basic and acidic residues" evidence="4">
    <location>
        <begin position="757"/>
        <end position="767"/>
    </location>
</feature>
<feature type="compositionally biased region" description="Basic and acidic residues" evidence="4">
    <location>
        <begin position="798"/>
        <end position="815"/>
    </location>
</feature>
<feature type="compositionally biased region" description="Polar residues" evidence="4">
    <location>
        <begin position="855"/>
        <end position="866"/>
    </location>
</feature>
<feature type="compositionally biased region" description="Basic and acidic residues" evidence="4">
    <location>
        <begin position="892"/>
        <end position="915"/>
    </location>
</feature>
<feature type="compositionally biased region" description="Acidic residues" evidence="4">
    <location>
        <begin position="936"/>
        <end position="945"/>
    </location>
</feature>
<feature type="compositionally biased region" description="Pro residues" evidence="4">
    <location>
        <begin position="1115"/>
        <end position="1129"/>
    </location>
</feature>
<feature type="compositionally biased region" description="Basic and acidic residues" evidence="4">
    <location>
        <begin position="1130"/>
        <end position="1174"/>
    </location>
</feature>
<feature type="compositionally biased region" description="Basic residues" evidence="4">
    <location>
        <begin position="1175"/>
        <end position="1192"/>
    </location>
</feature>
<feature type="compositionally biased region" description="Basic and acidic residues" evidence="4">
    <location>
        <begin position="1193"/>
        <end position="1214"/>
    </location>
</feature>
<feature type="compositionally biased region" description="Basic and acidic residues" evidence="4">
    <location>
        <begin position="1236"/>
        <end position="1317"/>
    </location>
</feature>
<feature type="site" description="Cleavage; by caspase-3" evidence="1">
    <location>
        <begin position="1093"/>
        <end position="1094"/>
    </location>
</feature>
<feature type="modified residue" description="Phosphoserine" evidence="2">
    <location>
        <position position="132"/>
    </location>
</feature>
<feature type="modified residue" description="Phosphoserine" evidence="2">
    <location>
        <position position="166"/>
    </location>
</feature>
<feature type="modified residue" description="Phosphoserine" evidence="2">
    <location>
        <position position="169"/>
    </location>
</feature>
<feature type="modified residue" description="Phosphoserine" evidence="2">
    <location>
        <position position="208"/>
    </location>
</feature>
<feature type="modified residue" description="Phosphoserine" evidence="2">
    <location>
        <position position="210"/>
    </location>
</feature>
<feature type="modified residue" description="Phosphoserine" evidence="11 12">
    <location>
        <position position="216"/>
    </location>
</feature>
<feature type="modified residue" description="Phosphoserine" evidence="2">
    <location>
        <position position="242"/>
    </location>
</feature>
<feature type="modified residue" description="Phosphothreonine" evidence="2">
    <location>
        <position position="253"/>
    </location>
</feature>
<feature type="modified residue" description="Phosphoserine" evidence="8">
    <location>
        <position position="295"/>
    </location>
</feature>
<feature type="modified residue" description="Phosphoserine" evidence="2">
    <location>
        <position position="332"/>
    </location>
</feature>
<feature type="modified residue" description="Phosphoserine" evidence="2">
    <location>
        <position position="369"/>
    </location>
</feature>
<feature type="modified residue" description="Phosphoserine" evidence="12">
    <location>
        <position position="387"/>
    </location>
</feature>
<feature type="modified residue" description="Phosphoserine" evidence="12">
    <location>
        <position position="389"/>
    </location>
</feature>
<feature type="modified residue" description="Phosphoserine" evidence="8 12">
    <location>
        <position position="391"/>
    </location>
</feature>
<feature type="modified residue" description="Phosphoserine" evidence="12">
    <location>
        <position position="413"/>
    </location>
</feature>
<feature type="modified residue" description="Phosphothreonine" evidence="12">
    <location>
        <position position="417"/>
    </location>
</feature>
<feature type="modified residue" description="Phosphothreonine" evidence="2">
    <location>
        <position position="423"/>
    </location>
</feature>
<feature type="modified residue" description="Phosphoserine" evidence="12">
    <location>
        <position position="454"/>
    </location>
</feature>
<feature type="modified residue" description="Phosphoserine" evidence="12">
    <location>
        <position position="477"/>
    </location>
</feature>
<feature type="modified residue" description="Phosphoserine" evidence="8 10 12">
    <location>
        <position position="479"/>
    </location>
</feature>
<feature type="modified residue" description="Phosphoserine" evidence="8 10 12">
    <location>
        <position position="491"/>
    </location>
</feature>
<feature type="modified residue" description="Phosphoserine" evidence="12">
    <location>
        <position position="497"/>
    </location>
</feature>
<feature type="modified residue" description="Phosphoserine" evidence="2">
    <location>
        <position position="561"/>
    </location>
</feature>
<feature type="modified residue" description="N6,N6,N6-trimethyllysine; by EHMT2; alternate" evidence="2">
    <location>
        <position position="654"/>
    </location>
</feature>
<feature type="modified residue" description="N6,N6-dimethyllysine; by EHMT2; alternate" evidence="2">
    <location>
        <position position="654"/>
    </location>
</feature>
<feature type="modified residue" description="Phosphoserine" evidence="2">
    <location>
        <position position="655"/>
    </location>
</feature>
<feature type="modified residue" description="Phosphoserine" evidence="2">
    <location>
        <position position="657"/>
    </location>
</feature>
<feature type="modified residue" description="Phosphoserine" evidence="8 11 12">
    <location>
        <position position="710"/>
    </location>
</feature>
<feature type="modified residue" description="Phosphoserine" evidence="2">
    <location>
        <position position="729"/>
    </location>
</feature>
<feature type="modified residue" description="Phosphoserine" evidence="2">
    <location>
        <position position="825"/>
    </location>
</feature>
<feature type="modified residue" description="Phosphoserine" evidence="12">
    <location>
        <position position="838"/>
    </location>
</feature>
<feature type="modified residue" description="N6-acetyllysine; alternate" evidence="13">
    <location>
        <position position="861"/>
    </location>
</feature>
<feature type="modified residue" description="Phosphoserine" evidence="2">
    <location>
        <position position="895"/>
    </location>
</feature>
<feature type="modified residue" description="Phosphoserine" evidence="12">
    <location>
        <position position="898"/>
    </location>
</feature>
<feature type="modified residue" description="Phosphothreonine" evidence="2">
    <location>
        <position position="975"/>
    </location>
</feature>
<feature type="modified residue" description="Phosphoserine" evidence="12">
    <location>
        <position position="986"/>
    </location>
</feature>
<feature type="modified residue" description="Phosphoserine" evidence="2">
    <location>
        <position position="989"/>
    </location>
</feature>
<feature type="modified residue" description="Phosphoserine" evidence="9 10 12">
    <location>
        <position position="1003"/>
    </location>
</feature>
<feature type="modified residue" description="Phosphoserine; by SRPK2 and PKB/AKT1" evidence="2">
    <location>
        <position position="1179"/>
    </location>
</feature>
<feature type="cross-link" description="Glycyl lysine isopeptide (Lys-Gly) (interchain with G-Cter in SUMO1)" evidence="2">
    <location>
        <position position="267"/>
    </location>
</feature>
<feature type="cross-link" description="Glycyl lysine isopeptide (Lys-Gly) (interchain with G-Cter in SUMO2)" evidence="2">
    <location>
        <position position="318"/>
    </location>
</feature>
<feature type="cross-link" description="Glycyl lysine isopeptide (Lys-Gly) (interchain with G-Cter in SUMO2)" evidence="2">
    <location>
        <position position="378"/>
    </location>
</feature>
<feature type="cross-link" description="Glycyl lysine isopeptide (Lys-Gly) (interchain with G-Cter in SUMO2)" evidence="2">
    <location>
        <position position="732"/>
    </location>
</feature>
<feature type="cross-link" description="Glycyl lysine isopeptide (Lys-Gly) (interchain with G-Cter in SUMO2); alternate" evidence="2">
    <location>
        <position position="861"/>
    </location>
</feature>
<feature type="cross-link" description="Glycyl lysine isopeptide (Lys-Gly) (interchain with G-Cter in SUMO2)" evidence="2">
    <location>
        <position position="879"/>
    </location>
</feature>
<feature type="cross-link" description="Glycyl lysine isopeptide (Lys-Gly) (interchain with G-Cter in SUMO2)" evidence="2">
    <location>
        <position position="969"/>
    </location>
</feature>
<feature type="cross-link" description="Glycyl lysine isopeptide (Lys-Gly) (interchain with G-Cter in SUMO2)" evidence="2">
    <location>
        <position position="1046"/>
    </location>
</feature>
<feature type="cross-link" description="Glycyl lysine isopeptide (Lys-Gly) (interchain with G-Cter in SUMO2)" evidence="2">
    <location>
        <position position="1106"/>
    </location>
</feature>
<feature type="splice variant" id="VSP_004031" description="In isoform 3." evidence="5">
    <location>
        <begin position="1"/>
        <end position="773"/>
    </location>
</feature>
<feature type="splice variant" id="VSP_004030" description="In isoform 2." evidence="5 6">
    <location>
        <begin position="1"/>
        <end position="757"/>
    </location>
</feature>
<feature type="splice variant" id="VSP_004032" description="In isoform 4." evidence="6">
    <original>EASAESEDEMTHPEGVASLLPPDFQSSLNRPELELSTHSPR</original>
    <variation>G</variation>
    <location>
        <begin position="164"/>
        <end position="204"/>
    </location>
</feature>
<feature type="splice variant" id="VSP_004033" description="In isoform 2." evidence="5 6">
    <original>ESERTHHTV</original>
    <variation>MMFSDSRAG</variation>
    <location>
        <begin position="758"/>
        <end position="766"/>
    </location>
</feature>
<feature type="sequence conflict" description="In Ref. 2; AAF89661." evidence="7" ref="2">
    <original>T</original>
    <variation>A</variation>
    <location>
        <position position="244"/>
    </location>
</feature>
<feature type="sequence conflict" description="In Ref. 2; AAF89661." evidence="7" ref="2">
    <original>T</original>
    <variation>A</variation>
    <location>
        <position position="515"/>
    </location>
</feature>
<feature type="sequence conflict" description="In Ref. 2; AAF89661." evidence="7" ref="2">
    <original>F</original>
    <variation>L</variation>
    <location>
        <position position="536"/>
    </location>
</feature>
<feature type="sequence conflict" description="In Ref. 2; AAF89661." evidence="7" ref="2">
    <original>G</original>
    <variation>D</variation>
    <location>
        <position position="557"/>
    </location>
</feature>
<feature type="sequence conflict" description="In Ref. 2; AAF89661." evidence="7" ref="2">
    <original>H</original>
    <variation>Y</variation>
    <location>
        <position position="568"/>
    </location>
</feature>
<feature type="sequence conflict" description="In Ref. 2; AAF89661." evidence="7" ref="2">
    <original>V</original>
    <variation>A</variation>
    <location>
        <position position="599"/>
    </location>
</feature>
<feature type="sequence conflict" description="In Ref. 2; AAF89661." evidence="7" ref="2">
    <original>S</original>
    <variation>I</variation>
    <location>
        <position position="729"/>
    </location>
</feature>
<feature type="sequence conflict" description="In Ref. 2; AAF89661." evidence="7" ref="2">
    <original>L</original>
    <variation>P</variation>
    <location>
        <position position="757"/>
    </location>
</feature>
<feature type="sequence conflict" description="In Ref. 1; AAD56723." evidence="7" ref="1">
    <original>T</original>
    <variation>A</variation>
    <location>
        <position position="773"/>
    </location>
</feature>
<feature type="sequence conflict" description="In Ref. 4; BAB28030." evidence="7" ref="4">
    <location>
        <position position="829"/>
    </location>
</feature>
<feature type="sequence conflict" description="In Ref. 1; AAD56723/AAD56727 and 2; AAF89661." evidence="7" ref="1 2">
    <original>R</original>
    <variation>Q</variation>
    <location>
        <position position="896"/>
    </location>
</feature>
<feature type="sequence conflict" description="In Ref. 4; BAB28030." evidence="7" ref="4">
    <original>G</original>
    <variation>R</variation>
    <location>
        <position position="1035"/>
    </location>
</feature>
<gene>
    <name type="primary">Acin1</name>
    <name type="synonym">Acinus</name>
</gene>
<keyword id="KW-0007">Acetylation</keyword>
<keyword id="KW-0025">Alternative splicing</keyword>
<keyword id="KW-0053">Apoptosis</keyword>
<keyword id="KW-1017">Isopeptide bond</keyword>
<keyword id="KW-0488">Methylation</keyword>
<keyword id="KW-0507">mRNA processing</keyword>
<keyword id="KW-0508">mRNA splicing</keyword>
<keyword id="KW-0539">Nucleus</keyword>
<keyword id="KW-0597">Phosphoprotein</keyword>
<keyword id="KW-1185">Reference proteome</keyword>
<keyword id="KW-0832">Ubl conjugation</keyword>
<dbReference type="EMBL" id="AF124725">
    <property type="protein sequence ID" value="AAD56723.1"/>
    <property type="molecule type" value="mRNA"/>
</dbReference>
<dbReference type="EMBL" id="AF124729">
    <property type="protein sequence ID" value="AAD56727.1"/>
    <property type="molecule type" value="mRNA"/>
</dbReference>
<dbReference type="EMBL" id="AF168782">
    <property type="protein sequence ID" value="AAF89661.1"/>
    <property type="status" value="ALT_FRAME"/>
    <property type="molecule type" value="mRNA"/>
</dbReference>
<dbReference type="EMBL" id="CT009512">
    <property type="status" value="NOT_ANNOTATED_CDS"/>
    <property type="molecule type" value="Genomic_DNA"/>
</dbReference>
<dbReference type="EMBL" id="AK011698">
    <property type="status" value="NOT_ANNOTATED_CDS"/>
    <property type="molecule type" value="mRNA"/>
</dbReference>
<dbReference type="EMBL" id="AK012099">
    <property type="protein sequence ID" value="BAB28030.1"/>
    <property type="molecule type" value="mRNA"/>
</dbReference>
<dbReference type="EMBL" id="AK012337">
    <property type="protein sequence ID" value="BAB28171.3"/>
    <property type="molecule type" value="mRNA"/>
</dbReference>
<dbReference type="EMBL" id="AK050467">
    <property type="protein sequence ID" value="BAC34272.1"/>
    <property type="molecule type" value="mRNA"/>
</dbReference>
<dbReference type="CCDS" id="CCDS27097.1">
    <molecule id="Q9JIX8-1"/>
</dbReference>
<dbReference type="CCDS" id="CCDS49492.1">
    <molecule id="Q9JIX8-2"/>
</dbReference>
<dbReference type="CCDS" id="CCDS56957.1">
    <molecule id="Q9JIX8-3"/>
</dbReference>
<dbReference type="CCDS" id="CCDS88664.1">
    <molecule id="Q9JIX8-4"/>
</dbReference>
<dbReference type="RefSeq" id="NP_001078941.2">
    <molecule id="Q9JIX8-2"/>
    <property type="nucleotide sequence ID" value="NM_001085472.2"/>
</dbReference>
<dbReference type="RefSeq" id="NP_001078942.2">
    <property type="nucleotide sequence ID" value="NM_001085473.2"/>
</dbReference>
<dbReference type="RefSeq" id="NP_001229534.1">
    <molecule id="Q9JIX8-3"/>
    <property type="nucleotide sequence ID" value="NM_001242605.1"/>
</dbReference>
<dbReference type="RefSeq" id="NP_001361699.1">
    <molecule id="Q9JIX8-4"/>
    <property type="nucleotide sequence ID" value="NM_001374770.1"/>
</dbReference>
<dbReference type="RefSeq" id="NP_062513.3">
    <property type="nucleotide sequence ID" value="NM_019567.3"/>
</dbReference>
<dbReference type="RefSeq" id="NP_075679.2">
    <molecule id="Q9JIX8-1"/>
    <property type="nucleotide sequence ID" value="NM_023190.3"/>
</dbReference>
<dbReference type="RefSeq" id="XP_006519361.1">
    <property type="nucleotide sequence ID" value="XM_006519298.3"/>
</dbReference>
<dbReference type="RefSeq" id="XP_006519367.1">
    <molecule id="Q9JIX8-3"/>
    <property type="nucleotide sequence ID" value="XM_006519304.4"/>
</dbReference>
<dbReference type="SMR" id="Q9JIX8"/>
<dbReference type="BioGRID" id="207849">
    <property type="interactions" value="9"/>
</dbReference>
<dbReference type="FunCoup" id="Q9JIX8">
    <property type="interactions" value="4324"/>
</dbReference>
<dbReference type="IntAct" id="Q9JIX8">
    <property type="interactions" value="8"/>
</dbReference>
<dbReference type="MINT" id="Q9JIX8"/>
<dbReference type="STRING" id="10090.ENSMUSP00000022793"/>
<dbReference type="GlyGen" id="Q9JIX8">
    <property type="glycosylation" value="2 sites, 1 N-linked glycan (1 site), 1 O-linked glycan (1 site)"/>
</dbReference>
<dbReference type="iPTMnet" id="Q9JIX8"/>
<dbReference type="PhosphoSitePlus" id="Q9JIX8"/>
<dbReference type="SwissPalm" id="Q9JIX8"/>
<dbReference type="CPTAC" id="non-CPTAC-3629"/>
<dbReference type="jPOST" id="Q9JIX8"/>
<dbReference type="PaxDb" id="10090-ENSMUSP00000022793"/>
<dbReference type="PeptideAtlas" id="Q9JIX8"/>
<dbReference type="ProteomicsDB" id="285927">
    <molecule id="Q9JIX8-1"/>
</dbReference>
<dbReference type="ProteomicsDB" id="285928">
    <molecule id="Q9JIX8-2"/>
</dbReference>
<dbReference type="ProteomicsDB" id="285929">
    <molecule id="Q9JIX8-3"/>
</dbReference>
<dbReference type="ProteomicsDB" id="285930">
    <molecule id="Q9JIX8-4"/>
</dbReference>
<dbReference type="Pumba" id="Q9JIX8"/>
<dbReference type="Antibodypedia" id="63">
    <property type="antibodies" value="519 antibodies from 36 providers"/>
</dbReference>
<dbReference type="DNASU" id="56215"/>
<dbReference type="Ensembl" id="ENSMUST00000022793.15">
    <molecule id="Q9JIX8-1"/>
    <property type="protein sequence ID" value="ENSMUSP00000022793.9"/>
    <property type="gene ID" value="ENSMUSG00000022185.20"/>
</dbReference>
<dbReference type="Ensembl" id="ENSMUST00000111484.9">
    <molecule id="Q9JIX8-4"/>
    <property type="protein sequence ID" value="ENSMUSP00000107109.3"/>
    <property type="gene ID" value="ENSMUSG00000022185.20"/>
</dbReference>
<dbReference type="Ensembl" id="ENSMUST00000126166.8">
    <molecule id="Q9JIX8-3"/>
    <property type="protein sequence ID" value="ENSMUSP00000114546.2"/>
    <property type="gene ID" value="ENSMUSG00000022185.20"/>
</dbReference>
<dbReference type="Ensembl" id="ENSMUST00000148754.10">
    <molecule id="Q9JIX8-2"/>
    <property type="protein sequence ID" value="ENSMUSP00000122003.4"/>
    <property type="gene ID" value="ENSMUSG00000022185.20"/>
</dbReference>
<dbReference type="Ensembl" id="ENSMUST00000167015.8">
    <molecule id="Q9JIX8-2"/>
    <property type="protein sequence ID" value="ENSMUSP00000125776.2"/>
    <property type="gene ID" value="ENSMUSG00000022185.20"/>
</dbReference>
<dbReference type="GeneID" id="56215"/>
<dbReference type="KEGG" id="mmu:56215"/>
<dbReference type="UCSC" id="uc007twr.2">
    <molecule id="Q9JIX8-3"/>
    <property type="organism name" value="mouse"/>
</dbReference>
<dbReference type="UCSC" id="uc007twv.2">
    <molecule id="Q9JIX8-1"/>
    <property type="organism name" value="mouse"/>
</dbReference>
<dbReference type="UCSC" id="uc007twx.2">
    <molecule id="Q9JIX8-4"/>
    <property type="organism name" value="mouse"/>
</dbReference>
<dbReference type="UCSC" id="uc011zld.1">
    <molecule id="Q9JIX8-2"/>
    <property type="organism name" value="mouse"/>
</dbReference>
<dbReference type="AGR" id="MGI:1891824"/>
<dbReference type="CTD" id="22985"/>
<dbReference type="MGI" id="MGI:1891824">
    <property type="gene designation" value="Acin1"/>
</dbReference>
<dbReference type="VEuPathDB" id="HostDB:ENSMUSG00000022185"/>
<dbReference type="eggNOG" id="KOG2416">
    <property type="taxonomic scope" value="Eukaryota"/>
</dbReference>
<dbReference type="GeneTree" id="ENSGT00710000106790"/>
<dbReference type="HOGENOM" id="CLU_482284_0_0_1"/>
<dbReference type="InParanoid" id="Q9JIX8"/>
<dbReference type="OMA" id="GVKWPPS"/>
<dbReference type="OrthoDB" id="5348404at2759"/>
<dbReference type="TreeFam" id="TF320727"/>
<dbReference type="Reactome" id="R-MMU-111465">
    <property type="pathway name" value="Apoptotic cleavage of cellular proteins"/>
</dbReference>
<dbReference type="Reactome" id="R-MMU-72163">
    <property type="pathway name" value="mRNA Splicing - Major Pathway"/>
</dbReference>
<dbReference type="BioGRID-ORCS" id="56215">
    <property type="hits" value="12 hits in 81 CRISPR screens"/>
</dbReference>
<dbReference type="ChiTaRS" id="Acin1">
    <property type="organism name" value="mouse"/>
</dbReference>
<dbReference type="PRO" id="PR:Q9JIX8"/>
<dbReference type="Proteomes" id="UP000000589">
    <property type="component" value="Chromosome 14"/>
</dbReference>
<dbReference type="RNAct" id="Q9JIX8">
    <property type="molecule type" value="protein"/>
</dbReference>
<dbReference type="Bgee" id="ENSMUSG00000022185">
    <property type="expression patterns" value="Expressed in embryonic brain and 252 other cell types or tissues"/>
</dbReference>
<dbReference type="ExpressionAtlas" id="Q9JIX8">
    <property type="expression patterns" value="baseline and differential"/>
</dbReference>
<dbReference type="GO" id="GO:0061574">
    <property type="term" value="C:ASAP complex"/>
    <property type="evidence" value="ECO:0000250"/>
    <property type="project" value="UniProtKB"/>
</dbReference>
<dbReference type="GO" id="GO:0005829">
    <property type="term" value="C:cytosol"/>
    <property type="evidence" value="ECO:0007669"/>
    <property type="project" value="Ensembl"/>
</dbReference>
<dbReference type="GO" id="GO:0016607">
    <property type="term" value="C:nuclear speck"/>
    <property type="evidence" value="ECO:0000250"/>
    <property type="project" value="UniProtKB"/>
</dbReference>
<dbReference type="GO" id="GO:0005730">
    <property type="term" value="C:nucleolus"/>
    <property type="evidence" value="ECO:0000314"/>
    <property type="project" value="MGI"/>
</dbReference>
<dbReference type="GO" id="GO:0005634">
    <property type="term" value="C:nucleus"/>
    <property type="evidence" value="ECO:0000250"/>
    <property type="project" value="UniProtKB"/>
</dbReference>
<dbReference type="GO" id="GO:0005886">
    <property type="term" value="C:plasma membrane"/>
    <property type="evidence" value="ECO:0007669"/>
    <property type="project" value="Ensembl"/>
</dbReference>
<dbReference type="GO" id="GO:0003676">
    <property type="term" value="F:nucleic acid binding"/>
    <property type="evidence" value="ECO:0007669"/>
    <property type="project" value="InterPro"/>
</dbReference>
<dbReference type="GO" id="GO:0030263">
    <property type="term" value="P:apoptotic chromosome condensation"/>
    <property type="evidence" value="ECO:0000250"/>
    <property type="project" value="UniProtKB"/>
</dbReference>
<dbReference type="GO" id="GO:0006915">
    <property type="term" value="P:apoptotic process"/>
    <property type="evidence" value="ECO:0000250"/>
    <property type="project" value="MGI"/>
</dbReference>
<dbReference type="GO" id="GO:0030218">
    <property type="term" value="P:erythrocyte differentiation"/>
    <property type="evidence" value="ECO:0000250"/>
    <property type="project" value="UniProtKB"/>
</dbReference>
<dbReference type="GO" id="GO:0006397">
    <property type="term" value="P:mRNA processing"/>
    <property type="evidence" value="ECO:0007669"/>
    <property type="project" value="UniProtKB-KW"/>
</dbReference>
<dbReference type="GO" id="GO:0048025">
    <property type="term" value="P:negative regulation of mRNA splicing, via spliceosome"/>
    <property type="evidence" value="ECO:0000250"/>
    <property type="project" value="UniProtKB"/>
</dbReference>
<dbReference type="GO" id="GO:0043065">
    <property type="term" value="P:positive regulation of apoptotic process"/>
    <property type="evidence" value="ECO:0000250"/>
    <property type="project" value="UniProtKB"/>
</dbReference>
<dbReference type="GO" id="GO:0045657">
    <property type="term" value="P:positive regulation of monocyte differentiation"/>
    <property type="evidence" value="ECO:0000250"/>
    <property type="project" value="UniProtKB"/>
</dbReference>
<dbReference type="GO" id="GO:0008380">
    <property type="term" value="P:RNA splicing"/>
    <property type="evidence" value="ECO:0007669"/>
    <property type="project" value="UniProtKB-KW"/>
</dbReference>
<dbReference type="CDD" id="cd12432">
    <property type="entry name" value="RRM_ACINU"/>
    <property type="match status" value="1"/>
</dbReference>
<dbReference type="FunFam" id="1.10.720.30:FF:000031">
    <property type="entry name" value="Apoptotic chromatin condensation inducer 1"/>
    <property type="match status" value="1"/>
</dbReference>
<dbReference type="FunFam" id="3.30.70.330:FF:000147">
    <property type="entry name" value="Apoptotic chromatin condensation inducer in the nucleus"/>
    <property type="match status" value="1"/>
</dbReference>
<dbReference type="Gene3D" id="3.30.70.330">
    <property type="match status" value="1"/>
</dbReference>
<dbReference type="Gene3D" id="1.10.720.30">
    <property type="entry name" value="SAP domain"/>
    <property type="match status" value="1"/>
</dbReference>
<dbReference type="InterPro" id="IPR034257">
    <property type="entry name" value="Acinus_RRM"/>
</dbReference>
<dbReference type="InterPro" id="IPR052793">
    <property type="entry name" value="EJC-associated_protein"/>
</dbReference>
<dbReference type="InterPro" id="IPR012677">
    <property type="entry name" value="Nucleotide-bd_a/b_plait_sf"/>
</dbReference>
<dbReference type="InterPro" id="IPR035979">
    <property type="entry name" value="RBD_domain_sf"/>
</dbReference>
<dbReference type="InterPro" id="IPR032552">
    <property type="entry name" value="RSB_motif"/>
</dbReference>
<dbReference type="InterPro" id="IPR003034">
    <property type="entry name" value="SAP_dom"/>
</dbReference>
<dbReference type="InterPro" id="IPR036361">
    <property type="entry name" value="SAP_dom_sf"/>
</dbReference>
<dbReference type="PANTHER" id="PTHR46589">
    <property type="entry name" value="APOPTOTIC CHROMATIN CONDENSATION INDUCER IN THE NUCLEUS"/>
    <property type="match status" value="1"/>
</dbReference>
<dbReference type="PANTHER" id="PTHR46589:SF1">
    <property type="entry name" value="APOPTOTIC CHROMATIN CONDENSATION INDUCER IN THE NUCLEUS"/>
    <property type="match status" value="1"/>
</dbReference>
<dbReference type="Pfam" id="PF16294">
    <property type="entry name" value="RSB_motif"/>
    <property type="match status" value="1"/>
</dbReference>
<dbReference type="Pfam" id="PF02037">
    <property type="entry name" value="SAP"/>
    <property type="match status" value="1"/>
</dbReference>
<dbReference type="SMART" id="SM00513">
    <property type="entry name" value="SAP"/>
    <property type="match status" value="1"/>
</dbReference>
<dbReference type="SUPFAM" id="SSF54928">
    <property type="entry name" value="RNA-binding domain, RBD"/>
    <property type="match status" value="1"/>
</dbReference>
<dbReference type="SUPFAM" id="SSF68906">
    <property type="entry name" value="SAP domain"/>
    <property type="match status" value="1"/>
</dbReference>
<dbReference type="PROSITE" id="PS50800">
    <property type="entry name" value="SAP"/>
    <property type="match status" value="1"/>
</dbReference>
<accession>Q9JIX8</accession>
<accession>B8JJ87</accession>
<accession>Q9CSN7</accession>
<accession>Q9CSR9</accession>
<accession>Q9CSX7</accession>
<accession>Q9R046</accession>
<accession>Q9R047</accession>
<name>ACINU_MOUSE</name>
<comment type="function">
    <text evidence="1">Auxiliary component of the splicing-dependent multiprotein exon junction complex (EJC) deposited at splice junction on mRNAs. The EJC is a dynamic structure consisting of core proteins and several peripheral nuclear and cytoplasmic associated factors that join the complex only transiently either during EJC assembly or during subsequent mRNA metabolism. Component of the ASAP complexes which bind RNA in a sequence-independent manner and are proposed to be recruited to the EJC prior to or during the splicing process and to regulate specific excision of introns in specific transcription subsets; ACIN1 confers RNA-binding to the complex. The ASAP complex can inhibit RNA processing during in vitro splicing reactions. The ASAP complex promotes apoptosis and is disassembled after induction of apoptosis. Involved in the splicing modulation of BCL2L1/Bcl-X (and probably other apoptotic genes); specifically inhibits formation of proapoptotic isoforms such as Bcl-X(S); the activity is different from the established EJC assembly and function. Induces apoptotic chromatin condensation after activation by CASP3. Regulates cyclin A1, but not cyclin A2, expression in leukemia cells (By similarity).</text>
</comment>
<comment type="subunit">
    <text evidence="1">Found in a mRNA splicing-dependent exon junction complex (EJC). Component of the heterotrimeric ASAP (apoptosis- and splicing-associated protein) complexes consisting of RNPS1, SAP18 and different isoforms of ACIN1; the association of SAP18 seems to require a preformed RNPS1:ACIN1 complex. Interacts with API5. Interacts with SRPK2 in a phosphorylation-dependent manner (By similarity).</text>
</comment>
<comment type="subcellular location">
    <subcellularLocation>
        <location evidence="1">Nucleus</location>
    </subcellularLocation>
    <subcellularLocation>
        <location evidence="1">Nucleus speckle</location>
    </subcellularLocation>
    <subcellularLocation>
        <location evidence="1">Nucleus</location>
        <location evidence="1">Nucleoplasm</location>
    </subcellularLocation>
    <text evidence="1">Phosphorylation on Ser-1179 by SRPK2 redistributes it from the nuclear speckles to the nucleoplasm.</text>
</comment>
<comment type="alternative products">
    <event type="alternative splicing"/>
    <isoform>
        <id>Q9JIX8-1</id>
        <name>1</name>
        <name>L</name>
        <sequence type="displayed"/>
    </isoform>
    <isoform>
        <id>Q9JIX8-2</id>
        <name>2</name>
        <name>S</name>
        <sequence type="described" ref="VSP_004030 VSP_004033"/>
    </isoform>
    <isoform>
        <id>Q9JIX8-3</id>
        <name>3</name>
        <name>S'</name>
        <sequence type="described" ref="VSP_004031"/>
    </isoform>
    <isoform>
        <id>Q9JIX8-4</id>
        <name>4</name>
        <sequence type="described" ref="VSP_004032"/>
    </isoform>
</comment>
<comment type="PTM">
    <text evidence="1">Undergoes proteolytic cleavage; the processed form is active, contrary to the uncleaved form.</text>
</comment>
<comment type="PTM">
    <text evidence="1">Phosphorylation on Ser-1179 by SRPK2 up-regulates its stimulatory effect on cyclin A1.</text>
</comment>
<comment type="sequence caution" evidence="7">
    <conflict type="frameshift">
        <sequence resource="EMBL-CDS" id="AAF89661"/>
    </conflict>
</comment>
<evidence type="ECO:0000250" key="1"/>
<evidence type="ECO:0000250" key="2">
    <source>
        <dbReference type="UniProtKB" id="Q9UKV3"/>
    </source>
</evidence>
<evidence type="ECO:0000255" key="3">
    <source>
        <dbReference type="PROSITE-ProRule" id="PRU00186"/>
    </source>
</evidence>
<evidence type="ECO:0000256" key="4">
    <source>
        <dbReference type="SAM" id="MobiDB-lite"/>
    </source>
</evidence>
<evidence type="ECO:0000303" key="5">
    <source>
    </source>
</evidence>
<evidence type="ECO:0000303" key="6">
    <source>
    </source>
</evidence>
<evidence type="ECO:0000305" key="7"/>
<evidence type="ECO:0007744" key="8">
    <source>
    </source>
</evidence>
<evidence type="ECO:0007744" key="9">
    <source>
    </source>
</evidence>
<evidence type="ECO:0007744" key="10">
    <source>
    </source>
</evidence>
<evidence type="ECO:0007744" key="11">
    <source>
    </source>
</evidence>
<evidence type="ECO:0007744" key="12">
    <source>
    </source>
</evidence>
<evidence type="ECO:0007744" key="13">
    <source>
    </source>
</evidence>